<comment type="function">
    <text evidence="1">Catalyzes the isomerization between 2-isopropylmalate and 3-isopropylmalate, via the formation of 2-isopropylmaleate.</text>
</comment>
<comment type="catalytic activity">
    <reaction evidence="1">
        <text>(2R,3S)-3-isopropylmalate = (2S)-2-isopropylmalate</text>
        <dbReference type="Rhea" id="RHEA:32287"/>
        <dbReference type="ChEBI" id="CHEBI:1178"/>
        <dbReference type="ChEBI" id="CHEBI:35121"/>
        <dbReference type="EC" id="4.2.1.33"/>
    </reaction>
</comment>
<comment type="pathway">
    <text evidence="1">Amino-acid biosynthesis; L-leucine biosynthesis; L-leucine from 3-methyl-2-oxobutanoate: step 2/4.</text>
</comment>
<comment type="subunit">
    <text evidence="1">Heterodimer of LeuC and LeuD.</text>
</comment>
<comment type="similarity">
    <text evidence="1">Belongs to the LeuD family. LeuD type 1 subfamily.</text>
</comment>
<gene>
    <name evidence="1" type="primary">leuD2</name>
    <name type="ordered locus">BPP2684</name>
</gene>
<organism>
    <name type="scientific">Bordetella parapertussis (strain 12822 / ATCC BAA-587 / NCTC 13253)</name>
    <dbReference type="NCBI Taxonomy" id="257311"/>
    <lineage>
        <taxon>Bacteria</taxon>
        <taxon>Pseudomonadati</taxon>
        <taxon>Pseudomonadota</taxon>
        <taxon>Betaproteobacteria</taxon>
        <taxon>Burkholderiales</taxon>
        <taxon>Alcaligenaceae</taxon>
        <taxon>Bordetella</taxon>
    </lineage>
</organism>
<sequence length="202" mass="22139">MQAFIRAHGIILPMNQDHVDTDAIIPQRWLVTVERDGLADGFMGAWRYDEHGQPRPECVLNQPAYQGAAIVLARENYGCGSSREHAVWAHQGYGIRAIVAASYGPIFHENCLKNGLLPITLPAADVATLMAQALADPGCACEVDLVSQRVIGPDGRAYPFEIDAGRRQLLLEGVDDIDLALARAADIAAFQRRQQQDQPWLA</sequence>
<protein>
    <recommendedName>
        <fullName evidence="1">3-isopropylmalate dehydratase small subunit 2</fullName>
        <ecNumber evidence="1">4.2.1.33</ecNumber>
    </recommendedName>
    <alternativeName>
        <fullName evidence="1">Alpha-IPM isomerase 2</fullName>
        <shortName evidence="1">IPMI 2</shortName>
    </alternativeName>
    <alternativeName>
        <fullName evidence="1">Isopropylmalate isomerase 2</fullName>
    </alternativeName>
</protein>
<name>LEUD2_BORPA</name>
<proteinExistence type="inferred from homology"/>
<evidence type="ECO:0000255" key="1">
    <source>
        <dbReference type="HAMAP-Rule" id="MF_01031"/>
    </source>
</evidence>
<accession>Q7W749</accession>
<reference key="1">
    <citation type="journal article" date="2003" name="Nat. Genet.">
        <title>Comparative analysis of the genome sequences of Bordetella pertussis, Bordetella parapertussis and Bordetella bronchiseptica.</title>
        <authorList>
            <person name="Parkhill J."/>
            <person name="Sebaihia M."/>
            <person name="Preston A."/>
            <person name="Murphy L.D."/>
            <person name="Thomson N.R."/>
            <person name="Harris D.E."/>
            <person name="Holden M.T.G."/>
            <person name="Churcher C.M."/>
            <person name="Bentley S.D."/>
            <person name="Mungall K.L."/>
            <person name="Cerdeno-Tarraga A.-M."/>
            <person name="Temple L."/>
            <person name="James K.D."/>
            <person name="Harris B."/>
            <person name="Quail M.A."/>
            <person name="Achtman M."/>
            <person name="Atkin R."/>
            <person name="Baker S."/>
            <person name="Basham D."/>
            <person name="Bason N."/>
            <person name="Cherevach I."/>
            <person name="Chillingworth T."/>
            <person name="Collins M."/>
            <person name="Cronin A."/>
            <person name="Davis P."/>
            <person name="Doggett J."/>
            <person name="Feltwell T."/>
            <person name="Goble A."/>
            <person name="Hamlin N."/>
            <person name="Hauser H."/>
            <person name="Holroyd S."/>
            <person name="Jagels K."/>
            <person name="Leather S."/>
            <person name="Moule S."/>
            <person name="Norberczak H."/>
            <person name="O'Neil S."/>
            <person name="Ormond D."/>
            <person name="Price C."/>
            <person name="Rabbinowitsch E."/>
            <person name="Rutter S."/>
            <person name="Sanders M."/>
            <person name="Saunders D."/>
            <person name="Seeger K."/>
            <person name="Sharp S."/>
            <person name="Simmonds M."/>
            <person name="Skelton J."/>
            <person name="Squares R."/>
            <person name="Squares S."/>
            <person name="Stevens K."/>
            <person name="Unwin L."/>
            <person name="Whitehead S."/>
            <person name="Barrell B.G."/>
            <person name="Maskell D.J."/>
        </authorList>
    </citation>
    <scope>NUCLEOTIDE SEQUENCE [LARGE SCALE GENOMIC DNA]</scope>
    <source>
        <strain>12822 / ATCC BAA-587 / NCTC 13253</strain>
    </source>
</reference>
<keyword id="KW-0028">Amino-acid biosynthesis</keyword>
<keyword id="KW-0100">Branched-chain amino acid biosynthesis</keyword>
<keyword id="KW-0432">Leucine biosynthesis</keyword>
<keyword id="KW-0456">Lyase</keyword>
<dbReference type="EC" id="4.2.1.33" evidence="1"/>
<dbReference type="EMBL" id="BX640431">
    <property type="protein sequence ID" value="CAE37977.1"/>
    <property type="molecule type" value="Genomic_DNA"/>
</dbReference>
<dbReference type="RefSeq" id="WP_010928674.1">
    <property type="nucleotide sequence ID" value="NC_002928.3"/>
</dbReference>
<dbReference type="SMR" id="Q7W749"/>
<dbReference type="GeneID" id="93204470"/>
<dbReference type="KEGG" id="bpa:BPP2684"/>
<dbReference type="HOGENOM" id="CLU_081378_0_3_4"/>
<dbReference type="UniPathway" id="UPA00048">
    <property type="reaction ID" value="UER00071"/>
</dbReference>
<dbReference type="Proteomes" id="UP000001421">
    <property type="component" value="Chromosome"/>
</dbReference>
<dbReference type="GO" id="GO:0009316">
    <property type="term" value="C:3-isopropylmalate dehydratase complex"/>
    <property type="evidence" value="ECO:0007669"/>
    <property type="project" value="InterPro"/>
</dbReference>
<dbReference type="GO" id="GO:0003861">
    <property type="term" value="F:3-isopropylmalate dehydratase activity"/>
    <property type="evidence" value="ECO:0007669"/>
    <property type="project" value="UniProtKB-UniRule"/>
</dbReference>
<dbReference type="GO" id="GO:0009098">
    <property type="term" value="P:L-leucine biosynthetic process"/>
    <property type="evidence" value="ECO:0007669"/>
    <property type="project" value="UniProtKB-UniRule"/>
</dbReference>
<dbReference type="CDD" id="cd01577">
    <property type="entry name" value="IPMI_Swivel"/>
    <property type="match status" value="1"/>
</dbReference>
<dbReference type="FunFam" id="3.20.19.10:FF:000003">
    <property type="entry name" value="3-isopropylmalate dehydratase small subunit"/>
    <property type="match status" value="1"/>
</dbReference>
<dbReference type="Gene3D" id="3.20.19.10">
    <property type="entry name" value="Aconitase, domain 4"/>
    <property type="match status" value="1"/>
</dbReference>
<dbReference type="HAMAP" id="MF_01031">
    <property type="entry name" value="LeuD_type1"/>
    <property type="match status" value="1"/>
</dbReference>
<dbReference type="InterPro" id="IPR004431">
    <property type="entry name" value="3-IsopropMal_deHydase_ssu"/>
</dbReference>
<dbReference type="InterPro" id="IPR015928">
    <property type="entry name" value="Aconitase/3IPM_dehydase_swvl"/>
</dbReference>
<dbReference type="InterPro" id="IPR000573">
    <property type="entry name" value="AconitaseA/IPMdHydase_ssu_swvl"/>
</dbReference>
<dbReference type="InterPro" id="IPR033940">
    <property type="entry name" value="IPMI_Swivel"/>
</dbReference>
<dbReference type="InterPro" id="IPR050075">
    <property type="entry name" value="LeuD"/>
</dbReference>
<dbReference type="NCBIfam" id="TIGR00171">
    <property type="entry name" value="leuD"/>
    <property type="match status" value="1"/>
</dbReference>
<dbReference type="NCBIfam" id="NF002458">
    <property type="entry name" value="PRK01641.1"/>
    <property type="match status" value="1"/>
</dbReference>
<dbReference type="PANTHER" id="PTHR43345:SF5">
    <property type="entry name" value="3-ISOPROPYLMALATE DEHYDRATASE SMALL SUBUNIT"/>
    <property type="match status" value="1"/>
</dbReference>
<dbReference type="PANTHER" id="PTHR43345">
    <property type="entry name" value="3-ISOPROPYLMALATE DEHYDRATASE SMALL SUBUNIT 2-RELATED-RELATED"/>
    <property type="match status" value="1"/>
</dbReference>
<dbReference type="Pfam" id="PF00694">
    <property type="entry name" value="Aconitase_C"/>
    <property type="match status" value="1"/>
</dbReference>
<dbReference type="SUPFAM" id="SSF52016">
    <property type="entry name" value="LeuD/IlvD-like"/>
    <property type="match status" value="1"/>
</dbReference>
<feature type="chain" id="PRO_0000141791" description="3-isopropylmalate dehydratase small subunit 2">
    <location>
        <begin position="1"/>
        <end position="202"/>
    </location>
</feature>